<accession>B8GRT8</accession>
<reference key="1">
    <citation type="journal article" date="2011" name="Stand. Genomic Sci.">
        <title>Complete genome sequence of 'Thioalkalivibrio sulfidophilus' HL-EbGr7.</title>
        <authorList>
            <person name="Muyzer G."/>
            <person name="Sorokin D.Y."/>
            <person name="Mavromatis K."/>
            <person name="Lapidus A."/>
            <person name="Clum A."/>
            <person name="Ivanova N."/>
            <person name="Pati A."/>
            <person name="d'Haeseleer P."/>
            <person name="Woyke T."/>
            <person name="Kyrpides N.C."/>
        </authorList>
    </citation>
    <scope>NUCLEOTIDE SEQUENCE [LARGE SCALE GENOMIC DNA]</scope>
    <source>
        <strain>HL-EbGR7</strain>
    </source>
</reference>
<evidence type="ECO:0000255" key="1">
    <source>
        <dbReference type="HAMAP-Rule" id="MF_00440"/>
    </source>
</evidence>
<name>NRDR_THISH</name>
<keyword id="KW-0067">ATP-binding</keyword>
<keyword id="KW-0238">DNA-binding</keyword>
<keyword id="KW-0479">Metal-binding</keyword>
<keyword id="KW-0547">Nucleotide-binding</keyword>
<keyword id="KW-1185">Reference proteome</keyword>
<keyword id="KW-0678">Repressor</keyword>
<keyword id="KW-0804">Transcription</keyword>
<keyword id="KW-0805">Transcription regulation</keyword>
<keyword id="KW-0862">Zinc</keyword>
<keyword id="KW-0863">Zinc-finger</keyword>
<dbReference type="EMBL" id="CP001339">
    <property type="protein sequence ID" value="ACL72642.1"/>
    <property type="molecule type" value="Genomic_DNA"/>
</dbReference>
<dbReference type="RefSeq" id="WP_012638125.1">
    <property type="nucleotide sequence ID" value="NC_011901.1"/>
</dbReference>
<dbReference type="SMR" id="B8GRT8"/>
<dbReference type="STRING" id="396588.Tgr7_1558"/>
<dbReference type="KEGG" id="tgr:Tgr7_1558"/>
<dbReference type="eggNOG" id="COG1327">
    <property type="taxonomic scope" value="Bacteria"/>
</dbReference>
<dbReference type="HOGENOM" id="CLU_108412_0_1_6"/>
<dbReference type="OrthoDB" id="9807461at2"/>
<dbReference type="Proteomes" id="UP000002383">
    <property type="component" value="Chromosome"/>
</dbReference>
<dbReference type="GO" id="GO:0005524">
    <property type="term" value="F:ATP binding"/>
    <property type="evidence" value="ECO:0007669"/>
    <property type="project" value="UniProtKB-KW"/>
</dbReference>
<dbReference type="GO" id="GO:0003677">
    <property type="term" value="F:DNA binding"/>
    <property type="evidence" value="ECO:0007669"/>
    <property type="project" value="UniProtKB-KW"/>
</dbReference>
<dbReference type="GO" id="GO:0008270">
    <property type="term" value="F:zinc ion binding"/>
    <property type="evidence" value="ECO:0007669"/>
    <property type="project" value="UniProtKB-UniRule"/>
</dbReference>
<dbReference type="GO" id="GO:0045892">
    <property type="term" value="P:negative regulation of DNA-templated transcription"/>
    <property type="evidence" value="ECO:0007669"/>
    <property type="project" value="UniProtKB-UniRule"/>
</dbReference>
<dbReference type="HAMAP" id="MF_00440">
    <property type="entry name" value="NrdR"/>
    <property type="match status" value="1"/>
</dbReference>
<dbReference type="InterPro" id="IPR005144">
    <property type="entry name" value="ATP-cone_dom"/>
</dbReference>
<dbReference type="InterPro" id="IPR055173">
    <property type="entry name" value="NrdR-like_N"/>
</dbReference>
<dbReference type="InterPro" id="IPR003796">
    <property type="entry name" value="RNR_NrdR-like"/>
</dbReference>
<dbReference type="NCBIfam" id="TIGR00244">
    <property type="entry name" value="transcriptional regulator NrdR"/>
    <property type="match status" value="1"/>
</dbReference>
<dbReference type="PANTHER" id="PTHR30455">
    <property type="entry name" value="TRANSCRIPTIONAL REPRESSOR NRDR"/>
    <property type="match status" value="1"/>
</dbReference>
<dbReference type="PANTHER" id="PTHR30455:SF2">
    <property type="entry name" value="TRANSCRIPTIONAL REPRESSOR NRDR"/>
    <property type="match status" value="1"/>
</dbReference>
<dbReference type="Pfam" id="PF03477">
    <property type="entry name" value="ATP-cone"/>
    <property type="match status" value="1"/>
</dbReference>
<dbReference type="Pfam" id="PF22811">
    <property type="entry name" value="Zn_ribbon_NrdR"/>
    <property type="match status" value="1"/>
</dbReference>
<dbReference type="PROSITE" id="PS51161">
    <property type="entry name" value="ATP_CONE"/>
    <property type="match status" value="1"/>
</dbReference>
<feature type="chain" id="PRO_1000191828" description="Transcriptional repressor NrdR">
    <location>
        <begin position="1"/>
        <end position="172"/>
    </location>
</feature>
<feature type="domain" description="ATP-cone" evidence="1">
    <location>
        <begin position="49"/>
        <end position="139"/>
    </location>
</feature>
<feature type="zinc finger region" evidence="1">
    <location>
        <begin position="3"/>
        <end position="34"/>
    </location>
</feature>
<organism>
    <name type="scientific">Thioalkalivibrio sulfidiphilus (strain HL-EbGR7)</name>
    <dbReference type="NCBI Taxonomy" id="396588"/>
    <lineage>
        <taxon>Bacteria</taxon>
        <taxon>Pseudomonadati</taxon>
        <taxon>Pseudomonadota</taxon>
        <taxon>Gammaproteobacteria</taxon>
        <taxon>Chromatiales</taxon>
        <taxon>Ectothiorhodospiraceae</taxon>
        <taxon>Thioalkalivibrio</taxon>
    </lineage>
</organism>
<proteinExistence type="inferred from homology"/>
<protein>
    <recommendedName>
        <fullName evidence="1">Transcriptional repressor NrdR</fullName>
    </recommendedName>
</protein>
<gene>
    <name evidence="1" type="primary">nrdR</name>
    <name type="ordered locus">Tgr7_1558</name>
</gene>
<comment type="function">
    <text evidence="1">Negatively regulates transcription of bacterial ribonucleotide reductase nrd genes and operons by binding to NrdR-boxes.</text>
</comment>
<comment type="cofactor">
    <cofactor evidence="1">
        <name>Zn(2+)</name>
        <dbReference type="ChEBI" id="CHEBI:29105"/>
    </cofactor>
    <text evidence="1">Binds 1 zinc ion.</text>
</comment>
<comment type="similarity">
    <text evidence="1">Belongs to the NrdR family.</text>
</comment>
<sequence>MRCPFCGAPDTRVIDSRLAGEGDQVRRRRECLSCSERFTTYENAELNMPRVVKRDGSREPFNEDKLKSGMTHALEKRAVSTDKVEEAVARIKRKLLGQGEREVDSRRIGEWVMEELRNLDQVAYIRFASVYLSFADVQAFREVIERLEKDLTPEMRKHQIPLLGDEEGEGKD</sequence>